<dbReference type="EC" id="2.1.1.133"/>
<dbReference type="EMBL" id="M59301">
    <property type="protein sequence ID" value="AAA25801.1"/>
    <property type="molecule type" value="Genomic_DNA"/>
</dbReference>
<dbReference type="SMR" id="P21922"/>
<dbReference type="KEGG" id="ag:AAA25801"/>
<dbReference type="BioCyc" id="MetaCyc:MONOMER-86"/>
<dbReference type="UniPathway" id="UPA00148">
    <property type="reaction ID" value="UER00215"/>
</dbReference>
<dbReference type="GO" id="GO:0046026">
    <property type="term" value="F:precorrin-4 C11-methyltransferase activity"/>
    <property type="evidence" value="ECO:0007669"/>
    <property type="project" value="UniProtKB-EC"/>
</dbReference>
<dbReference type="GO" id="GO:0009236">
    <property type="term" value="P:cobalamin biosynthetic process"/>
    <property type="evidence" value="ECO:0007669"/>
    <property type="project" value="UniProtKB-UniPathway"/>
</dbReference>
<dbReference type="GO" id="GO:0032259">
    <property type="term" value="P:methylation"/>
    <property type="evidence" value="ECO:0007669"/>
    <property type="project" value="UniProtKB-KW"/>
</dbReference>
<dbReference type="CDD" id="cd11641">
    <property type="entry name" value="Precorrin-4_C11-MT"/>
    <property type="match status" value="1"/>
</dbReference>
<dbReference type="Gene3D" id="3.40.1010.10">
    <property type="entry name" value="Cobalt-precorrin-4 Transmethylase, Domain 1"/>
    <property type="match status" value="1"/>
</dbReference>
<dbReference type="Gene3D" id="3.30.950.10">
    <property type="entry name" value="Methyltransferase, Cobalt-precorrin-4 Transmethylase, Domain 2"/>
    <property type="match status" value="1"/>
</dbReference>
<dbReference type="InterPro" id="IPR000878">
    <property type="entry name" value="4pyrrol_Mease"/>
</dbReference>
<dbReference type="InterPro" id="IPR035996">
    <property type="entry name" value="4pyrrol_Methylase_sf"/>
</dbReference>
<dbReference type="InterPro" id="IPR014777">
    <property type="entry name" value="4pyrrole_Mease_sub1"/>
</dbReference>
<dbReference type="InterPro" id="IPR014776">
    <property type="entry name" value="4pyrrole_Mease_sub2"/>
</dbReference>
<dbReference type="InterPro" id="IPR006362">
    <property type="entry name" value="Cbl_synth_CobM/CibF"/>
</dbReference>
<dbReference type="InterPro" id="IPR050161">
    <property type="entry name" value="Siro_Cobalamin_biosynth"/>
</dbReference>
<dbReference type="InterPro" id="IPR003043">
    <property type="entry name" value="Uropor_MeTrfase_CS"/>
</dbReference>
<dbReference type="NCBIfam" id="TIGR01465">
    <property type="entry name" value="cobM_cbiF"/>
    <property type="match status" value="1"/>
</dbReference>
<dbReference type="PANTHER" id="PTHR45790:SF4">
    <property type="entry name" value="COBALT-PRECORRIN-4 C(11)-METHYLTRANSFERASE"/>
    <property type="match status" value="1"/>
</dbReference>
<dbReference type="PANTHER" id="PTHR45790">
    <property type="entry name" value="SIROHEME SYNTHASE-RELATED"/>
    <property type="match status" value="1"/>
</dbReference>
<dbReference type="Pfam" id="PF00590">
    <property type="entry name" value="TP_methylase"/>
    <property type="match status" value="1"/>
</dbReference>
<dbReference type="SUPFAM" id="SSF53790">
    <property type="entry name" value="Tetrapyrrole methylase"/>
    <property type="match status" value="1"/>
</dbReference>
<dbReference type="PROSITE" id="PS00839">
    <property type="entry name" value="SUMT_1"/>
    <property type="match status" value="1"/>
</dbReference>
<dbReference type="PROSITE" id="PS00840">
    <property type="entry name" value="SUMT_2"/>
    <property type="match status" value="1"/>
</dbReference>
<reference key="1">
    <citation type="journal article" date="1990" name="J. Bacteriol.">
        <title>Genetic and sequence analysis of an 8.7-kilobase Pseudomonas denitrificans fragment carrying eight genes involved in transformation of precorrin-2 to cobyrinic acid.</title>
        <authorList>
            <person name="Crouzet J."/>
            <person name="Cameron B."/>
            <person name="Cauchois L."/>
            <person name="Rigault S."/>
            <person name="Rouyez M.-C."/>
            <person name="Blanche F."/>
            <person name="Thibaut D."/>
            <person name="Debussche L."/>
        </authorList>
    </citation>
    <scope>NUCLEOTIDE SEQUENCE [GENOMIC DNA]</scope>
    <source>
        <strain>SC510</strain>
    </source>
</reference>
<reference key="2">
    <citation type="journal article" date="1993" name="J. Bacteriol.">
        <title>Biosynthesis of the corrin macrocycle of coenzyme B12 in Pseudomonas denitrificans.</title>
        <authorList>
            <person name="Debussche L."/>
            <person name="Thibaut D."/>
            <person name="Cameron B."/>
            <person name="Crouzet J."/>
            <person name="Blanche F.J."/>
        </authorList>
    </citation>
    <scope>CHARACTERIZATION</scope>
</reference>
<name>COBM_SINSX</name>
<comment type="function">
    <text>Catalyzes the methylation of C-11 in precorrin-4 to form precorrin-5.</text>
</comment>
<comment type="catalytic activity">
    <reaction>
        <text>precorrin-4 + S-adenosyl-L-methionine = precorrin-5 + S-adenosyl-L-homocysteine</text>
        <dbReference type="Rhea" id="RHEA:22012"/>
        <dbReference type="ChEBI" id="CHEBI:57769"/>
        <dbReference type="ChEBI" id="CHEBI:57856"/>
        <dbReference type="ChEBI" id="CHEBI:59789"/>
        <dbReference type="ChEBI" id="CHEBI:77871"/>
        <dbReference type="EC" id="2.1.1.133"/>
    </reaction>
</comment>
<comment type="pathway">
    <text>Cofactor biosynthesis; adenosylcobalamin biosynthesis; cob(II)yrinate a,c-diamide from precorrin-2 (aerobic route): step 4/10.</text>
</comment>
<comment type="similarity">
    <text evidence="1">Belongs to the precorrin methyltransferase family.</text>
</comment>
<comment type="caution">
    <text evidence="1">Was originally thought to originate from Pseudomonas denitrificans, but similarity searches show that the sequence is much closer to Sinorhizobium. The entry's taxonomy has been changed.</text>
</comment>
<accession>P21922</accession>
<gene>
    <name type="primary">cobM</name>
</gene>
<protein>
    <recommendedName>
        <fullName>Precorrin-4 C(11)-methyltransferase</fullName>
        <ecNumber>2.1.1.133</ecNumber>
    </recommendedName>
    <alternativeName>
        <fullName>Precorrin-3 methylase</fullName>
    </alternativeName>
</protein>
<organism>
    <name type="scientific">Sinorhizobium sp</name>
    <dbReference type="NCBI Taxonomy" id="42445"/>
    <lineage>
        <taxon>Bacteria</taxon>
        <taxon>Pseudomonadati</taxon>
        <taxon>Pseudomonadota</taxon>
        <taxon>Alphaproteobacteria</taxon>
        <taxon>Hyphomicrobiales</taxon>
        <taxon>Rhizobiaceae</taxon>
        <taxon>Sinorhizobium/Ensifer group</taxon>
        <taxon>Sinorhizobium</taxon>
    </lineage>
</organism>
<proteinExistence type="evidence at protein level"/>
<evidence type="ECO:0000305" key="1"/>
<keyword id="KW-0169">Cobalamin biosynthesis</keyword>
<keyword id="KW-0489">Methyltransferase</keyword>
<keyword id="KW-0949">S-adenosyl-L-methionine</keyword>
<keyword id="KW-0808">Transferase</keyword>
<feature type="chain" id="PRO_0000150395" description="Precorrin-4 C(11)-methyltransferase">
    <location>
        <begin position="1"/>
        <end position="253"/>
    </location>
</feature>
<sequence length="253" mass="26863">MTVHFIGAGPGAADLITVRGRDLIGRCPVCLYAGSIVSPELLRYCPPGARIVDTAPMSLDEIEAEYVKAEAEGLDVARLHSGDLSVWSAVAEQIRRLEKHGIAYTMTPGVPSFAAAASALGRELTIPAVAQSLVLTRVSGRASPMPNSETLSAFGATGSTLAIHLAIHALQQVVEELTPLYGADCPVAIVVKASWPDERVVRGTLGDIAAKVAEEPIERTALIFVGPGLEASDFRESSLYDPAYQRRFRGRGE</sequence>